<name>SCMC2_BOVIN</name>
<proteinExistence type="evidence at transcript level"/>
<evidence type="ECO:0000250" key="1"/>
<evidence type="ECO:0000255" key="2"/>
<evidence type="ECO:0000255" key="3">
    <source>
        <dbReference type="PROSITE-ProRule" id="PRU00448"/>
    </source>
</evidence>
<evidence type="ECO:0000305" key="4"/>
<feature type="chain" id="PRO_0000317601" description="Calcium-binding mitochondrial carrier protein SCaMC-2">
    <location>
        <begin position="1"/>
        <end position="469"/>
    </location>
</feature>
<feature type="topological domain" description="Mitochondrial intermembrane" evidence="2">
    <location>
        <begin position="1"/>
        <end position="189"/>
    </location>
</feature>
<feature type="transmembrane region" description="Helical; Name=1" evidence="2">
    <location>
        <begin position="190"/>
        <end position="207"/>
    </location>
</feature>
<feature type="topological domain" description="Mitochondrial matrix" evidence="2">
    <location>
        <begin position="208"/>
        <end position="244"/>
    </location>
</feature>
<feature type="transmembrane region" description="Helical; Name=2" evidence="2">
    <location>
        <begin position="245"/>
        <end position="264"/>
    </location>
</feature>
<feature type="topological domain" description="Mitochondrial intermembrane" evidence="2">
    <location>
        <begin position="265"/>
        <end position="287"/>
    </location>
</feature>
<feature type="transmembrane region" description="Helical; Name=3" evidence="2">
    <location>
        <begin position="288"/>
        <end position="301"/>
    </location>
</feature>
<feature type="topological domain" description="Mitochondrial matrix" evidence="2">
    <location>
        <begin position="302"/>
        <end position="337"/>
    </location>
</feature>
<feature type="transmembrane region" description="Helical; Name=4" evidence="2">
    <location>
        <begin position="338"/>
        <end position="357"/>
    </location>
</feature>
<feature type="topological domain" description="Mitochondrial intermembrane" evidence="2">
    <location>
        <begin position="358"/>
        <end position="380"/>
    </location>
</feature>
<feature type="transmembrane region" description="Helical; Name=5" evidence="2">
    <location>
        <begin position="381"/>
        <end position="398"/>
    </location>
</feature>
<feature type="topological domain" description="Mitochondrial matrix" evidence="2">
    <location>
        <begin position="399"/>
        <end position="437"/>
    </location>
</feature>
<feature type="transmembrane region" description="Helical; Name=6" evidence="2">
    <location>
        <begin position="438"/>
        <end position="457"/>
    </location>
</feature>
<feature type="topological domain" description="Mitochondrial intermembrane" evidence="2">
    <location>
        <begin position="458"/>
        <end position="469"/>
    </location>
</feature>
<feature type="domain" description="EF-hand 1" evidence="3">
    <location>
        <begin position="47"/>
        <end position="80"/>
    </location>
</feature>
<feature type="domain" description="EF-hand 2" evidence="3">
    <location>
        <begin position="78"/>
        <end position="113"/>
    </location>
</feature>
<feature type="domain" description="EF-hand 3" evidence="3">
    <location>
        <begin position="114"/>
        <end position="149"/>
    </location>
</feature>
<feature type="repeat" description="Solcar 1">
    <location>
        <begin position="184"/>
        <end position="270"/>
    </location>
</feature>
<feature type="repeat" description="Solcar 2">
    <location>
        <begin position="278"/>
        <end position="363"/>
    </location>
</feature>
<feature type="repeat" description="Solcar 3">
    <location>
        <begin position="375"/>
        <end position="463"/>
    </location>
</feature>
<feature type="binding site" evidence="4">
    <location>
        <position position="60"/>
    </location>
    <ligand>
        <name>Ca(2+)</name>
        <dbReference type="ChEBI" id="CHEBI:29108"/>
    </ligand>
</feature>
<feature type="binding site" evidence="4">
    <location>
        <position position="62"/>
    </location>
    <ligand>
        <name>Ca(2+)</name>
        <dbReference type="ChEBI" id="CHEBI:29108"/>
    </ligand>
</feature>
<feature type="binding site" evidence="4">
    <location>
        <position position="64"/>
    </location>
    <ligand>
        <name>Ca(2+)</name>
        <dbReference type="ChEBI" id="CHEBI:29108"/>
    </ligand>
</feature>
<feature type="binding site" evidence="4">
    <location>
        <position position="66"/>
    </location>
    <ligand>
        <name>Ca(2+)</name>
        <dbReference type="ChEBI" id="CHEBI:29108"/>
    </ligand>
</feature>
<feature type="binding site" evidence="4">
    <location>
        <position position="71"/>
    </location>
    <ligand>
        <name>Ca(2+)</name>
        <dbReference type="ChEBI" id="CHEBI:29108"/>
    </ligand>
</feature>
<feature type="sequence conflict" description="In Ref. 2; AAI08099." evidence="4" ref="2">
    <original>S</original>
    <variation>R</variation>
    <location>
        <position position="273"/>
    </location>
</feature>
<feature type="sequence conflict" description="In Ref. 2; AAI08099." evidence="4" ref="2">
    <original>T</original>
    <variation>A</variation>
    <location>
        <position position="306"/>
    </location>
</feature>
<feature type="sequence conflict" description="In Ref. 2; AAI08099." evidence="4" ref="2">
    <original>F</original>
    <variation>C</variation>
    <location>
        <position position="378"/>
    </location>
</feature>
<protein>
    <recommendedName>
        <fullName>Calcium-binding mitochondrial carrier protein SCaMC-2</fullName>
    </recommendedName>
    <alternativeName>
        <fullName>Small calcium-binding mitochondrial carrier protein 2</fullName>
    </alternativeName>
    <alternativeName>
        <fullName>Solute carrier family 25 member 25</fullName>
    </alternativeName>
</protein>
<accession>Q0V7M4</accession>
<accession>Q32PJ0</accession>
<reference key="1">
    <citation type="journal article" date="2005" name="BMC Genomics">
        <title>Characterization of 954 bovine full-CDS cDNA sequences.</title>
        <authorList>
            <person name="Harhay G.P."/>
            <person name="Sonstegard T.S."/>
            <person name="Keele J.W."/>
            <person name="Heaton M.P."/>
            <person name="Clawson M.L."/>
            <person name="Snelling W.M."/>
            <person name="Wiedmann R.T."/>
            <person name="Van Tassell C.P."/>
            <person name="Smith T.P.L."/>
        </authorList>
    </citation>
    <scope>NUCLEOTIDE SEQUENCE [LARGE SCALE MRNA]</scope>
</reference>
<reference key="2">
    <citation type="submission" date="2005-10" db="EMBL/GenBank/DDBJ databases">
        <authorList>
            <consortium name="NIH - Mammalian Gene Collection (MGC) project"/>
        </authorList>
    </citation>
    <scope>NUCLEOTIDE SEQUENCE [LARGE SCALE MRNA]</scope>
    <source>
        <strain>Hereford</strain>
        <tissue>Testis</tissue>
    </source>
</reference>
<keyword id="KW-0106">Calcium</keyword>
<keyword id="KW-0472">Membrane</keyword>
<keyword id="KW-0479">Metal-binding</keyword>
<keyword id="KW-0496">Mitochondrion</keyword>
<keyword id="KW-0999">Mitochondrion inner membrane</keyword>
<keyword id="KW-1185">Reference proteome</keyword>
<keyword id="KW-0677">Repeat</keyword>
<keyword id="KW-0812">Transmembrane</keyword>
<keyword id="KW-1133">Transmembrane helix</keyword>
<keyword id="KW-0813">Transport</keyword>
<sequence>MLCLCLYVPLIGEAQTEFQYFESKGLPAELKSIFKLSVFIPSQEFSTYRQWKQKIVQAGDKDLDGQLDFEEFVHYLQDHEKKLRLVFKSLDKKNDGRIDAQEIMQSLRDLGVKISEQQAEKILKSMDKNGTMTIDWNEWRDYHLLHPVENIPEIILYWKHSTIFDVGENLTVPDEFTVEERQTGMWWRHLVAGGGAGAVSRTCTAPLDRLKVLMQVHASRSNNMCIVGGFTQMIREGGARSLWRGNGINVLKIAPESAIKFMAYEQIKRLIGSDQETLRIHERLVAGSLAGAIAQSSIYPMEVLKTRMALRKTGQYSGMLDCARKILAREGMAAFYKGYVPNMLGIIPYAGIDLAVYETLKNAWLQRYAVNSADPGVFVLLACGTMSSTCGQLASYPLALVRTRMQAQASMEGAPEVTMSSLFKQILRTEGAFGLYRGLAPNFMKVIPAVSISYVVYENLKITLGVQSR</sequence>
<gene>
    <name type="primary">SLC25A25</name>
    <name type="synonym">SCAMC2</name>
</gene>
<dbReference type="EMBL" id="BT026546">
    <property type="protein sequence ID" value="ABH06333.1"/>
    <property type="molecule type" value="mRNA"/>
</dbReference>
<dbReference type="EMBL" id="BC108098">
    <property type="protein sequence ID" value="AAI08099.1"/>
    <property type="molecule type" value="mRNA"/>
</dbReference>
<dbReference type="RefSeq" id="NP_001033234.1">
    <property type="nucleotide sequence ID" value="NM_001038145.2"/>
</dbReference>
<dbReference type="SMR" id="Q0V7M4"/>
<dbReference type="FunCoup" id="Q0V7M4">
    <property type="interactions" value="1730"/>
</dbReference>
<dbReference type="STRING" id="9913.ENSBTAP00000057181"/>
<dbReference type="PaxDb" id="9913-ENSBTAP00000015802"/>
<dbReference type="Ensembl" id="ENSBTAT00000015802.6">
    <property type="protein sequence ID" value="ENSBTAP00000015802.6"/>
    <property type="gene ID" value="ENSBTAG00000011912.7"/>
</dbReference>
<dbReference type="GeneID" id="527786"/>
<dbReference type="KEGG" id="bta:527786"/>
<dbReference type="CTD" id="114789"/>
<dbReference type="VGNC" id="VGNC:34751">
    <property type="gene designation" value="SLC25A25"/>
</dbReference>
<dbReference type="eggNOG" id="KOG0036">
    <property type="taxonomic scope" value="Eukaryota"/>
</dbReference>
<dbReference type="GeneTree" id="ENSGT00940000157207"/>
<dbReference type="HOGENOM" id="CLU_015166_2_0_1"/>
<dbReference type="InParanoid" id="Q0V7M4"/>
<dbReference type="OrthoDB" id="270584at2759"/>
<dbReference type="TreeFam" id="TF313492"/>
<dbReference type="Proteomes" id="UP000009136">
    <property type="component" value="Chromosome 11"/>
</dbReference>
<dbReference type="GO" id="GO:0005743">
    <property type="term" value="C:mitochondrial inner membrane"/>
    <property type="evidence" value="ECO:0007669"/>
    <property type="project" value="UniProtKB-SubCell"/>
</dbReference>
<dbReference type="GO" id="GO:0005347">
    <property type="term" value="F:ATP transmembrane transporter activity"/>
    <property type="evidence" value="ECO:0000318"/>
    <property type="project" value="GO_Central"/>
</dbReference>
<dbReference type="GO" id="GO:0005509">
    <property type="term" value="F:calcium ion binding"/>
    <property type="evidence" value="ECO:0007669"/>
    <property type="project" value="InterPro"/>
</dbReference>
<dbReference type="GO" id="GO:0015866">
    <property type="term" value="P:ADP transport"/>
    <property type="evidence" value="ECO:0000318"/>
    <property type="project" value="GO_Central"/>
</dbReference>
<dbReference type="GO" id="GO:0015867">
    <property type="term" value="P:ATP transport"/>
    <property type="evidence" value="ECO:0000318"/>
    <property type="project" value="GO_Central"/>
</dbReference>
<dbReference type="FunFam" id="1.10.238.10:FF:000098">
    <property type="entry name" value="calcium-binding mitochondrial carrier protein SCaMC-2 isoform X1"/>
    <property type="match status" value="1"/>
</dbReference>
<dbReference type="FunFam" id="1.10.238.10:FF:000028">
    <property type="entry name" value="Putative calcium-binding mitochondrial carrier protein scamc-2"/>
    <property type="match status" value="1"/>
</dbReference>
<dbReference type="FunFam" id="1.50.40.10:FF:000003">
    <property type="entry name" value="Putative calcium-binding mitochondrial carrier protein scamc-2"/>
    <property type="match status" value="1"/>
</dbReference>
<dbReference type="Gene3D" id="1.10.238.10">
    <property type="entry name" value="EF-hand"/>
    <property type="match status" value="2"/>
</dbReference>
<dbReference type="Gene3D" id="1.50.40.10">
    <property type="entry name" value="Mitochondrial carrier domain"/>
    <property type="match status" value="1"/>
</dbReference>
<dbReference type="InterPro" id="IPR011992">
    <property type="entry name" value="EF-hand-dom_pair"/>
</dbReference>
<dbReference type="InterPro" id="IPR002048">
    <property type="entry name" value="EF_hand_dom"/>
</dbReference>
<dbReference type="InterPro" id="IPR002167">
    <property type="entry name" value="GDC-like"/>
</dbReference>
<dbReference type="InterPro" id="IPR002067">
    <property type="entry name" value="Mit_carrier"/>
</dbReference>
<dbReference type="InterPro" id="IPR018108">
    <property type="entry name" value="Mitochondrial_sb/sol_carrier"/>
</dbReference>
<dbReference type="InterPro" id="IPR023395">
    <property type="entry name" value="Mt_carrier_dom_sf"/>
</dbReference>
<dbReference type="PANTHER" id="PTHR24089">
    <property type="entry name" value="SOLUTE CARRIER FAMILY 25"/>
    <property type="match status" value="1"/>
</dbReference>
<dbReference type="Pfam" id="PF13499">
    <property type="entry name" value="EF-hand_7"/>
    <property type="match status" value="1"/>
</dbReference>
<dbReference type="Pfam" id="PF13833">
    <property type="entry name" value="EF-hand_8"/>
    <property type="match status" value="1"/>
</dbReference>
<dbReference type="Pfam" id="PF00153">
    <property type="entry name" value="Mito_carr"/>
    <property type="match status" value="3"/>
</dbReference>
<dbReference type="PRINTS" id="PR00928">
    <property type="entry name" value="GRAVESDC"/>
</dbReference>
<dbReference type="PRINTS" id="PR00926">
    <property type="entry name" value="MITOCARRIER"/>
</dbReference>
<dbReference type="SMART" id="SM00054">
    <property type="entry name" value="EFh"/>
    <property type="match status" value="3"/>
</dbReference>
<dbReference type="SUPFAM" id="SSF47473">
    <property type="entry name" value="EF-hand"/>
    <property type="match status" value="1"/>
</dbReference>
<dbReference type="SUPFAM" id="SSF103506">
    <property type="entry name" value="Mitochondrial carrier"/>
    <property type="match status" value="1"/>
</dbReference>
<dbReference type="PROSITE" id="PS50222">
    <property type="entry name" value="EF_HAND_2"/>
    <property type="match status" value="3"/>
</dbReference>
<dbReference type="PROSITE" id="PS50920">
    <property type="entry name" value="SOLCAR"/>
    <property type="match status" value="3"/>
</dbReference>
<organism>
    <name type="scientific">Bos taurus</name>
    <name type="common">Bovine</name>
    <dbReference type="NCBI Taxonomy" id="9913"/>
    <lineage>
        <taxon>Eukaryota</taxon>
        <taxon>Metazoa</taxon>
        <taxon>Chordata</taxon>
        <taxon>Craniata</taxon>
        <taxon>Vertebrata</taxon>
        <taxon>Euteleostomi</taxon>
        <taxon>Mammalia</taxon>
        <taxon>Eutheria</taxon>
        <taxon>Laurasiatheria</taxon>
        <taxon>Artiodactyla</taxon>
        <taxon>Ruminantia</taxon>
        <taxon>Pecora</taxon>
        <taxon>Bovidae</taxon>
        <taxon>Bovinae</taxon>
        <taxon>Bos</taxon>
    </lineage>
</organism>
<comment type="function">
    <text evidence="1">Calcium-dependent mitochondrial solute carrier. Mitochondrial solute carriers shuttle metabolites, nucleotides, and cofactors through the mitochondrial inner membrane. May act as a ATP-Mg/Pi exchanger that mediates the transport of Mg-ATP in exchange for phosphate, catalyzing the net uptake or efflux of adenine nucleotides into or from the mitochondria (By similarity).</text>
</comment>
<comment type="subcellular location">
    <subcellularLocation>
        <location evidence="1">Mitochondrion inner membrane</location>
        <topology evidence="1">Multi-pass membrane protein</topology>
    </subcellularLocation>
</comment>
<comment type="similarity">
    <text evidence="4">Belongs to the mitochondrial carrier (TC 2.A.29) family.</text>
</comment>